<evidence type="ECO:0000269" key="1">
    <source>
    </source>
</evidence>
<evidence type="ECO:0000303" key="2">
    <source>
    </source>
</evidence>
<evidence type="ECO:0000305" key="3"/>
<reference key="1">
    <citation type="journal article" date="1981" name="J. Biol. Chem.">
        <title>Sequence analysis of the DNA encoding the Eco RI endonuclease and methylase.</title>
        <authorList>
            <person name="Greene P.J."/>
            <person name="Gupta M."/>
            <person name="Boyer H.W."/>
            <person name="Brown W.E."/>
            <person name="Rosenberg J.M."/>
        </authorList>
    </citation>
    <scope>NUCLEOTIDE SEQUENCE [GENOMIC DNA]</scope>
    <source>
        <plasmid>pMB1</plasmid>
    </source>
</reference>
<reference key="2">
    <citation type="journal article" date="1981" name="J. Biol. Chem.">
        <title>DNA sequences of structural genes for Eco RI DNA restriction and modification enzymes.</title>
        <authorList>
            <person name="Newman A.K."/>
            <person name="Rubin R.A."/>
            <person name="Kim S.-H."/>
            <person name="Modrich P."/>
        </authorList>
    </citation>
    <scope>NUCLEOTIDE SEQUENCE [GENOMIC DNA]</scope>
    <source>
        <strain>C</strain>
        <plasmid>pMB4</plasmid>
    </source>
</reference>
<reference key="3">
    <citation type="journal article" date="1981" name="J. Biol. Chem.">
        <title>Partial NH2- and COOH-terminal sequence analyses of Eco RI DNA restriction and modification enzymes.</title>
        <authorList>
            <person name="Rubin R.A."/>
            <person name="Modrich P."/>
            <person name="Vanaman T.C."/>
        </authorList>
    </citation>
    <scope>PROTEIN SEQUENCE OF 2</scope>
    <scope>CONFIRMATION OF 2-25 AND CARBOXYL ENDS OF SEQUENCE BY AMINO ACID ANALYSIS</scope>
</reference>
<reference key="4">
    <citation type="journal article" date="2003" name="Nucleic Acids Res.">
        <title>A nomenclature for restriction enzymes, DNA methyltransferases, homing endonucleases and their genes.</title>
        <authorList>
            <person name="Roberts R.J."/>
            <person name="Belfort M."/>
            <person name="Bestor T."/>
            <person name="Bhagwat A.S."/>
            <person name="Bickle T.A."/>
            <person name="Bitinaite J."/>
            <person name="Blumenthal R.M."/>
            <person name="Degtyarev S.K."/>
            <person name="Dryden D.T."/>
            <person name="Dybvig K."/>
            <person name="Firman K."/>
            <person name="Gromova E.S."/>
            <person name="Gumport R.I."/>
            <person name="Halford S.E."/>
            <person name="Hattman S."/>
            <person name="Heitman J."/>
            <person name="Hornby D.P."/>
            <person name="Janulaitis A."/>
            <person name="Jeltsch A."/>
            <person name="Josephsen J."/>
            <person name="Kiss A."/>
            <person name="Klaenhammer T.R."/>
            <person name="Kobayashi I."/>
            <person name="Kong H."/>
            <person name="Krueger D.H."/>
            <person name="Lacks S."/>
            <person name="Marinus M.G."/>
            <person name="Miyahara M."/>
            <person name="Morgan R.D."/>
            <person name="Murray N.E."/>
            <person name="Nagaraja V."/>
            <person name="Piekarowicz A."/>
            <person name="Pingoud A."/>
            <person name="Raleigh E."/>
            <person name="Rao D.N."/>
            <person name="Reich N."/>
            <person name="Repin V.E."/>
            <person name="Selker E.U."/>
            <person name="Shaw P.C."/>
            <person name="Stein D.C."/>
            <person name="Stoddard B.L."/>
            <person name="Szybalski W."/>
            <person name="Trautner T.A."/>
            <person name="Van Etten J.L."/>
            <person name="Vitor J.M."/>
            <person name="Wilson G.G."/>
            <person name="Xu S.Y."/>
        </authorList>
    </citation>
    <scope>NOMENCLATURE</scope>
</reference>
<comment type="function">
    <text evidence="2">A methylase that recognizes the double-stranded sequence 5'-GAATTC-3', methylates A-3 on both strands, and protects the DNA from cleavage by the EcoRI endonuclease.</text>
</comment>
<comment type="catalytic activity">
    <reaction>
        <text>a 2'-deoxyadenosine in DNA + S-adenosyl-L-methionine = an N(6)-methyl-2'-deoxyadenosine in DNA + S-adenosyl-L-homocysteine + H(+)</text>
        <dbReference type="Rhea" id="RHEA:15197"/>
        <dbReference type="Rhea" id="RHEA-COMP:12418"/>
        <dbReference type="Rhea" id="RHEA-COMP:12419"/>
        <dbReference type="ChEBI" id="CHEBI:15378"/>
        <dbReference type="ChEBI" id="CHEBI:57856"/>
        <dbReference type="ChEBI" id="CHEBI:59789"/>
        <dbReference type="ChEBI" id="CHEBI:90615"/>
        <dbReference type="ChEBI" id="CHEBI:90616"/>
        <dbReference type="EC" id="2.1.1.72"/>
    </reaction>
</comment>
<comment type="subunit">
    <text>Monomer.</text>
</comment>
<comment type="similarity">
    <text evidence="3">Belongs to the N(4)/N(6)-methyltransferase family.</text>
</comment>
<name>MTE1_ECOLX</name>
<accession>P00472</accession>
<feature type="initiator methionine" description="Removed" evidence="1">
    <location>
        <position position="1"/>
    </location>
</feature>
<feature type="chain" id="PRO_0000087959" description="Type II methyltransferase M.EcoRI">
    <location>
        <begin position="2"/>
        <end position="326"/>
    </location>
</feature>
<proteinExistence type="evidence at protein level"/>
<keyword id="KW-0903">Direct protein sequencing</keyword>
<keyword id="KW-0238">DNA-binding</keyword>
<keyword id="KW-0489">Methyltransferase</keyword>
<keyword id="KW-0614">Plasmid</keyword>
<keyword id="KW-0680">Restriction system</keyword>
<keyword id="KW-0949">S-adenosyl-L-methionine</keyword>
<keyword id="KW-0808">Transferase</keyword>
<dbReference type="EC" id="2.1.1.72"/>
<dbReference type="EMBL" id="J01675">
    <property type="protein sequence ID" value="AAA26372.1"/>
    <property type="molecule type" value="Genomic_DNA"/>
</dbReference>
<dbReference type="PIR" id="A92308">
    <property type="entry name" value="XYECP4"/>
</dbReference>
<dbReference type="RefSeq" id="WP_002670781.1">
    <property type="nucleotide sequence ID" value="NZ_VNZC01000056.1"/>
</dbReference>
<dbReference type="REBASE" id="3395">
    <property type="entry name" value="M.EcoRI"/>
</dbReference>
<dbReference type="PATRIC" id="fig|562.8010.peg.1143"/>
<dbReference type="PRO" id="PR:P00472"/>
<dbReference type="GO" id="GO:0003677">
    <property type="term" value="F:DNA binding"/>
    <property type="evidence" value="ECO:0007669"/>
    <property type="project" value="UniProtKB-KW"/>
</dbReference>
<dbReference type="GO" id="GO:0009007">
    <property type="term" value="F:site-specific DNA-methyltransferase (adenine-specific) activity"/>
    <property type="evidence" value="ECO:0007669"/>
    <property type="project" value="UniProtKB-EC"/>
</dbReference>
<dbReference type="GO" id="GO:0009307">
    <property type="term" value="P:DNA restriction-modification system"/>
    <property type="evidence" value="ECO:0007669"/>
    <property type="project" value="UniProtKB-KW"/>
</dbReference>
<dbReference type="GO" id="GO:0032259">
    <property type="term" value="P:methylation"/>
    <property type="evidence" value="ECO:0007669"/>
    <property type="project" value="UniProtKB-KW"/>
</dbReference>
<dbReference type="InterPro" id="IPR002052">
    <property type="entry name" value="DNA_methylase_N6_adenine_CS"/>
</dbReference>
<dbReference type="InterPro" id="IPR025247">
    <property type="entry name" value="EcoRI-like_methylase"/>
</dbReference>
<dbReference type="Pfam" id="PF13651">
    <property type="entry name" value="EcoRI_methylase"/>
    <property type="match status" value="1"/>
</dbReference>
<dbReference type="PROSITE" id="PS00092">
    <property type="entry name" value="N6_MTASE"/>
    <property type="match status" value="1"/>
</dbReference>
<geneLocation type="plasmid">
    <name>pMB1</name>
</geneLocation>
<geneLocation type="plasmid">
    <name>pMB4</name>
</geneLocation>
<organism>
    <name type="scientific">Escherichia coli</name>
    <dbReference type="NCBI Taxonomy" id="562"/>
    <lineage>
        <taxon>Bacteria</taxon>
        <taxon>Pseudomonadati</taxon>
        <taxon>Pseudomonadota</taxon>
        <taxon>Gammaproteobacteria</taxon>
        <taxon>Enterobacterales</taxon>
        <taxon>Enterobacteriaceae</taxon>
        <taxon>Escherichia</taxon>
    </lineage>
</organism>
<sequence>MARNATNKLLHKAKKSKSDEFYTQYCDIENELQYYREHFSDKVVYCNCDDPRVSNFFKYFAVNFDNLGLKKLIASCYVENKEGFSSSEAAKNGFYYEYHKENGKKLVFDDISVSSFCGDGDFRSSESIDLLKKSDIVVTNPPFSLFREYLDQLIKYDKKFLIIANVNSITYKEVFNLIKENKIWLGVHLGRGVSGFIVPEHYELYGTEARIDSNGNRIISPNNCLWLTNLDVFIRHKDLPLTRKYFGNESSYPKYDNYDAINVNKTKDIPLDYNGVMGVPITFLHKFNPEQFELIKFRKGVDEKDLSINGKCPYFRILIKNKRLQK</sequence>
<protein>
    <recommendedName>
        <fullName evidence="2">Type II methyltransferase M.EcoRI</fullName>
        <shortName evidence="2">M.EcoRI</shortName>
        <ecNumber>2.1.1.72</ecNumber>
    </recommendedName>
    <alternativeName>
        <fullName>Adenine-specific methyltransferase EcoRI</fullName>
    </alternativeName>
    <alternativeName>
        <fullName>Modification methylase EcoRI</fullName>
    </alternativeName>
</protein>
<gene>
    <name type="primary">ecoRIM</name>
</gene>